<sequence length="325" mass="36210">MSWFTPEVIDILISIVKAVVILLVVVTCGAFMSFGERRLLGLFQNRYGPNRVGWGGSLQLVADMIKMFFKEDWVPKFSDRVIFTLAPMIAFTSLLLAFAIVPVSPTWAVSDLNIGILFFLMMAGLAVYAVLFAGWSSNNKYSLLGAMRASAQTLSYEVFIGLSLMGVVAQADSFNMQAIVESQAHMWNVIPQFFGFITFAIAGVAVCHRHPFDQPEAEQELADGYHIEYSGMKFGLFFVGEYIGIVTVSALIVTLFFGGWQGPFLPPFVWFALKTAFFMMMFILIRAALPRPRYDQVMSFGWKVCLPLTLLNLLATAAVILYNAQ</sequence>
<organism>
    <name type="scientific">Serratia proteamaculans (strain 568)</name>
    <dbReference type="NCBI Taxonomy" id="399741"/>
    <lineage>
        <taxon>Bacteria</taxon>
        <taxon>Pseudomonadati</taxon>
        <taxon>Pseudomonadota</taxon>
        <taxon>Gammaproteobacteria</taxon>
        <taxon>Enterobacterales</taxon>
        <taxon>Yersiniaceae</taxon>
        <taxon>Serratia</taxon>
    </lineage>
</organism>
<reference key="1">
    <citation type="submission" date="2007-09" db="EMBL/GenBank/DDBJ databases">
        <title>Complete sequence of chromosome of Serratia proteamaculans 568.</title>
        <authorList>
            <consortium name="US DOE Joint Genome Institute"/>
            <person name="Copeland A."/>
            <person name="Lucas S."/>
            <person name="Lapidus A."/>
            <person name="Barry K."/>
            <person name="Glavina del Rio T."/>
            <person name="Dalin E."/>
            <person name="Tice H."/>
            <person name="Pitluck S."/>
            <person name="Chain P."/>
            <person name="Malfatti S."/>
            <person name="Shin M."/>
            <person name="Vergez L."/>
            <person name="Schmutz J."/>
            <person name="Larimer F."/>
            <person name="Land M."/>
            <person name="Hauser L."/>
            <person name="Kyrpides N."/>
            <person name="Kim E."/>
            <person name="Taghavi S."/>
            <person name="Newman L."/>
            <person name="Vangronsveld J."/>
            <person name="van der Lelie D."/>
            <person name="Richardson P."/>
        </authorList>
    </citation>
    <scope>NUCLEOTIDE SEQUENCE [LARGE SCALE GENOMIC DNA]</scope>
    <source>
        <strain>568</strain>
    </source>
</reference>
<name>NUOH_SERP5</name>
<comment type="function">
    <text evidence="1">NDH-1 shuttles electrons from NADH, via FMN and iron-sulfur (Fe-S) centers, to quinones in the respiratory chain. The immediate electron acceptor for the enzyme in this species is believed to be ubiquinone. Couples the redox reaction to proton translocation (for every two electrons transferred, four hydrogen ions are translocated across the cytoplasmic membrane), and thus conserves the redox energy in a proton gradient. This subunit may bind ubiquinone.</text>
</comment>
<comment type="catalytic activity">
    <reaction evidence="1">
        <text>a quinone + NADH + 5 H(+)(in) = a quinol + NAD(+) + 4 H(+)(out)</text>
        <dbReference type="Rhea" id="RHEA:57888"/>
        <dbReference type="ChEBI" id="CHEBI:15378"/>
        <dbReference type="ChEBI" id="CHEBI:24646"/>
        <dbReference type="ChEBI" id="CHEBI:57540"/>
        <dbReference type="ChEBI" id="CHEBI:57945"/>
        <dbReference type="ChEBI" id="CHEBI:132124"/>
    </reaction>
</comment>
<comment type="subunit">
    <text evidence="1">NDH-1 is composed of 13 different subunits. Subunits NuoA, H, J, K, L, M, N constitute the membrane sector of the complex.</text>
</comment>
<comment type="subcellular location">
    <subcellularLocation>
        <location evidence="1">Cell inner membrane</location>
        <topology evidence="1">Multi-pass membrane protein</topology>
    </subcellularLocation>
</comment>
<comment type="similarity">
    <text evidence="1">Belongs to the complex I subunit 1 family.</text>
</comment>
<gene>
    <name evidence="1" type="primary">nuoH</name>
    <name type="ordered locus">Spro_3302</name>
</gene>
<feature type="chain" id="PRO_1000067758" description="NADH-quinone oxidoreductase subunit H">
    <location>
        <begin position="1"/>
        <end position="325"/>
    </location>
</feature>
<feature type="transmembrane region" description="Helical" evidence="1">
    <location>
        <begin position="11"/>
        <end position="31"/>
    </location>
</feature>
<feature type="transmembrane region" description="Helical" evidence="1">
    <location>
        <begin position="81"/>
        <end position="101"/>
    </location>
</feature>
<feature type="transmembrane region" description="Helical" evidence="1">
    <location>
        <begin position="114"/>
        <end position="134"/>
    </location>
</feature>
<feature type="transmembrane region" description="Helical" evidence="1">
    <location>
        <begin position="149"/>
        <end position="169"/>
    </location>
</feature>
<feature type="transmembrane region" description="Helical" evidence="1">
    <location>
        <begin position="186"/>
        <end position="206"/>
    </location>
</feature>
<feature type="transmembrane region" description="Helical" evidence="1">
    <location>
        <begin position="237"/>
        <end position="257"/>
    </location>
</feature>
<feature type="transmembrane region" description="Helical" evidence="1">
    <location>
        <begin position="265"/>
        <end position="285"/>
    </location>
</feature>
<feature type="transmembrane region" description="Helical" evidence="1">
    <location>
        <begin position="304"/>
        <end position="324"/>
    </location>
</feature>
<dbReference type="EC" id="7.1.1.-" evidence="1"/>
<dbReference type="EMBL" id="CP000826">
    <property type="protein sequence ID" value="ABV42400.1"/>
    <property type="molecule type" value="Genomic_DNA"/>
</dbReference>
<dbReference type="SMR" id="A8GH10"/>
<dbReference type="STRING" id="399741.Spro_3302"/>
<dbReference type="KEGG" id="spe:Spro_3302"/>
<dbReference type="eggNOG" id="COG1005">
    <property type="taxonomic scope" value="Bacteria"/>
</dbReference>
<dbReference type="HOGENOM" id="CLU_015134_0_1_6"/>
<dbReference type="OrthoDB" id="9803734at2"/>
<dbReference type="GO" id="GO:0005886">
    <property type="term" value="C:plasma membrane"/>
    <property type="evidence" value="ECO:0007669"/>
    <property type="project" value="UniProtKB-SubCell"/>
</dbReference>
<dbReference type="GO" id="GO:0003954">
    <property type="term" value="F:NADH dehydrogenase activity"/>
    <property type="evidence" value="ECO:0007669"/>
    <property type="project" value="TreeGrafter"/>
</dbReference>
<dbReference type="GO" id="GO:0016655">
    <property type="term" value="F:oxidoreductase activity, acting on NAD(P)H, quinone or similar compound as acceptor"/>
    <property type="evidence" value="ECO:0007669"/>
    <property type="project" value="UniProtKB-UniRule"/>
</dbReference>
<dbReference type="GO" id="GO:0048038">
    <property type="term" value="F:quinone binding"/>
    <property type="evidence" value="ECO:0007669"/>
    <property type="project" value="UniProtKB-KW"/>
</dbReference>
<dbReference type="GO" id="GO:0009060">
    <property type="term" value="P:aerobic respiration"/>
    <property type="evidence" value="ECO:0007669"/>
    <property type="project" value="TreeGrafter"/>
</dbReference>
<dbReference type="HAMAP" id="MF_01350">
    <property type="entry name" value="NDH1_NuoH"/>
    <property type="match status" value="1"/>
</dbReference>
<dbReference type="InterPro" id="IPR001694">
    <property type="entry name" value="NADH_UbQ_OxRdtase_su1/FPO"/>
</dbReference>
<dbReference type="InterPro" id="IPR018086">
    <property type="entry name" value="NADH_UbQ_OxRdtase_su1_CS"/>
</dbReference>
<dbReference type="NCBIfam" id="NF004740">
    <property type="entry name" value="PRK06076.1-1"/>
    <property type="match status" value="1"/>
</dbReference>
<dbReference type="NCBIfam" id="NF004741">
    <property type="entry name" value="PRK06076.1-2"/>
    <property type="match status" value="1"/>
</dbReference>
<dbReference type="PANTHER" id="PTHR11432">
    <property type="entry name" value="NADH DEHYDROGENASE SUBUNIT 1"/>
    <property type="match status" value="1"/>
</dbReference>
<dbReference type="PANTHER" id="PTHR11432:SF3">
    <property type="entry name" value="NADH-UBIQUINONE OXIDOREDUCTASE CHAIN 1"/>
    <property type="match status" value="1"/>
</dbReference>
<dbReference type="Pfam" id="PF00146">
    <property type="entry name" value="NADHdh"/>
    <property type="match status" value="1"/>
</dbReference>
<dbReference type="PROSITE" id="PS00667">
    <property type="entry name" value="COMPLEX1_ND1_1"/>
    <property type="match status" value="1"/>
</dbReference>
<dbReference type="PROSITE" id="PS00668">
    <property type="entry name" value="COMPLEX1_ND1_2"/>
    <property type="match status" value="1"/>
</dbReference>
<evidence type="ECO:0000255" key="1">
    <source>
        <dbReference type="HAMAP-Rule" id="MF_01350"/>
    </source>
</evidence>
<keyword id="KW-0997">Cell inner membrane</keyword>
<keyword id="KW-1003">Cell membrane</keyword>
<keyword id="KW-0472">Membrane</keyword>
<keyword id="KW-0520">NAD</keyword>
<keyword id="KW-0874">Quinone</keyword>
<keyword id="KW-1278">Translocase</keyword>
<keyword id="KW-0812">Transmembrane</keyword>
<keyword id="KW-1133">Transmembrane helix</keyword>
<keyword id="KW-0830">Ubiquinone</keyword>
<protein>
    <recommendedName>
        <fullName evidence="1">NADH-quinone oxidoreductase subunit H</fullName>
        <ecNumber evidence="1">7.1.1.-</ecNumber>
    </recommendedName>
    <alternativeName>
        <fullName evidence="1">NADH dehydrogenase I subunit H</fullName>
    </alternativeName>
    <alternativeName>
        <fullName evidence="1">NDH-1 subunit H</fullName>
    </alternativeName>
</protein>
<proteinExistence type="inferred from homology"/>
<accession>A8GH10</accession>